<feature type="chain" id="PRO_1000096242" description="Iron-sulfur cluster assembly protein CyaY">
    <location>
        <begin position="1"/>
        <end position="111"/>
    </location>
</feature>
<organism>
    <name type="scientific">Cupriavidus taiwanensis (strain DSM 17343 / BCRC 17206 / CCUG 44338 / CIP 107171 / LMG 19424 / R1)</name>
    <name type="common">Ralstonia taiwanensis (strain LMG 19424)</name>
    <dbReference type="NCBI Taxonomy" id="977880"/>
    <lineage>
        <taxon>Bacteria</taxon>
        <taxon>Pseudomonadati</taxon>
        <taxon>Pseudomonadota</taxon>
        <taxon>Betaproteobacteria</taxon>
        <taxon>Burkholderiales</taxon>
        <taxon>Burkholderiaceae</taxon>
        <taxon>Cupriavidus</taxon>
    </lineage>
</organism>
<reference key="1">
    <citation type="journal article" date="2008" name="Genome Res.">
        <title>Genome sequence of the beta-rhizobium Cupriavidus taiwanensis and comparative genomics of rhizobia.</title>
        <authorList>
            <person name="Amadou C."/>
            <person name="Pascal G."/>
            <person name="Mangenot S."/>
            <person name="Glew M."/>
            <person name="Bontemps C."/>
            <person name="Capela D."/>
            <person name="Carrere S."/>
            <person name="Cruveiller S."/>
            <person name="Dossat C."/>
            <person name="Lajus A."/>
            <person name="Marchetti M."/>
            <person name="Poinsot V."/>
            <person name="Rouy Z."/>
            <person name="Servin B."/>
            <person name="Saad M."/>
            <person name="Schenowitz C."/>
            <person name="Barbe V."/>
            <person name="Batut J."/>
            <person name="Medigue C."/>
            <person name="Masson-Boivin C."/>
        </authorList>
    </citation>
    <scope>NUCLEOTIDE SEQUENCE [LARGE SCALE GENOMIC DNA]</scope>
    <source>
        <strain>DSM 17343 / BCRC 17206 / CCUG 44338 / CIP 107171 / LMG 19424 / R1</strain>
    </source>
</reference>
<gene>
    <name evidence="1" type="primary">cyaY</name>
    <name type="ordered locus">RALTA_A2901</name>
</gene>
<sequence length="111" mass="12086">MPPLSESEFLALATRELDRIEAAVEAAADAADADIEISRTGNVMELEFENGSKIIINSQAPMQELWVAARAGGFHFRRDGERWIDTRNGGELYAALSGYVSEQAGASLSFH</sequence>
<protein>
    <recommendedName>
        <fullName evidence="1">Iron-sulfur cluster assembly protein CyaY</fullName>
    </recommendedName>
</protein>
<evidence type="ECO:0000255" key="1">
    <source>
        <dbReference type="HAMAP-Rule" id="MF_00142"/>
    </source>
</evidence>
<name>CYAY_CUPTR</name>
<dbReference type="EMBL" id="CU633749">
    <property type="protein sequence ID" value="CAQ70826.1"/>
    <property type="molecule type" value="Genomic_DNA"/>
</dbReference>
<dbReference type="RefSeq" id="WP_012354117.1">
    <property type="nucleotide sequence ID" value="NC_010528.1"/>
</dbReference>
<dbReference type="SMR" id="B3R7C6"/>
<dbReference type="GeneID" id="29762280"/>
<dbReference type="KEGG" id="cti:RALTA_A2901"/>
<dbReference type="eggNOG" id="COG1965">
    <property type="taxonomic scope" value="Bacteria"/>
</dbReference>
<dbReference type="HOGENOM" id="CLU_080880_3_0_4"/>
<dbReference type="BioCyc" id="CTAI977880:RALTA_RS14140-MONOMER"/>
<dbReference type="Proteomes" id="UP000001692">
    <property type="component" value="Chromosome 1"/>
</dbReference>
<dbReference type="GO" id="GO:0005829">
    <property type="term" value="C:cytosol"/>
    <property type="evidence" value="ECO:0007669"/>
    <property type="project" value="TreeGrafter"/>
</dbReference>
<dbReference type="GO" id="GO:0008199">
    <property type="term" value="F:ferric iron binding"/>
    <property type="evidence" value="ECO:0007669"/>
    <property type="project" value="InterPro"/>
</dbReference>
<dbReference type="GO" id="GO:0008198">
    <property type="term" value="F:ferrous iron binding"/>
    <property type="evidence" value="ECO:0007669"/>
    <property type="project" value="TreeGrafter"/>
</dbReference>
<dbReference type="GO" id="GO:0016226">
    <property type="term" value="P:iron-sulfur cluster assembly"/>
    <property type="evidence" value="ECO:0007669"/>
    <property type="project" value="UniProtKB-UniRule"/>
</dbReference>
<dbReference type="Gene3D" id="3.30.920.10">
    <property type="entry name" value="Frataxin/CyaY"/>
    <property type="match status" value="1"/>
</dbReference>
<dbReference type="HAMAP" id="MF_00142">
    <property type="entry name" value="CyaY"/>
    <property type="match status" value="1"/>
</dbReference>
<dbReference type="InterPro" id="IPR047584">
    <property type="entry name" value="CyaY"/>
</dbReference>
<dbReference type="InterPro" id="IPR002908">
    <property type="entry name" value="Frataxin/CyaY"/>
</dbReference>
<dbReference type="InterPro" id="IPR036524">
    <property type="entry name" value="Frataxin/CyaY_sf"/>
</dbReference>
<dbReference type="InterPro" id="IPR020895">
    <property type="entry name" value="Frataxin_CS"/>
</dbReference>
<dbReference type="NCBIfam" id="TIGR03421">
    <property type="entry name" value="FeS_CyaY"/>
    <property type="match status" value="1"/>
</dbReference>
<dbReference type="PANTHER" id="PTHR16821">
    <property type="entry name" value="FRATAXIN"/>
    <property type="match status" value="1"/>
</dbReference>
<dbReference type="PANTHER" id="PTHR16821:SF2">
    <property type="entry name" value="FRATAXIN, MITOCHONDRIAL"/>
    <property type="match status" value="1"/>
</dbReference>
<dbReference type="Pfam" id="PF01491">
    <property type="entry name" value="Frataxin_Cyay"/>
    <property type="match status" value="1"/>
</dbReference>
<dbReference type="SMART" id="SM01219">
    <property type="entry name" value="Frataxin_Cyay"/>
    <property type="match status" value="1"/>
</dbReference>
<dbReference type="SUPFAM" id="SSF55387">
    <property type="entry name" value="Frataxin/Nqo15-like"/>
    <property type="match status" value="1"/>
</dbReference>
<dbReference type="PROSITE" id="PS01344">
    <property type="entry name" value="FRATAXIN_1"/>
    <property type="match status" value="1"/>
</dbReference>
<dbReference type="PROSITE" id="PS50810">
    <property type="entry name" value="FRATAXIN_2"/>
    <property type="match status" value="1"/>
</dbReference>
<comment type="function">
    <text evidence="1">Involved in iron-sulfur (Fe-S) cluster assembly. May act as a regulator of Fe-S biogenesis.</text>
</comment>
<comment type="similarity">
    <text evidence="1">Belongs to the frataxin family.</text>
</comment>
<proteinExistence type="inferred from homology"/>
<keyword id="KW-0408">Iron</keyword>
<keyword id="KW-0479">Metal-binding</keyword>
<accession>B3R7C6</accession>